<gene>
    <name evidence="1" type="primary">purC</name>
    <name type="ordered locus">MM_0855</name>
</gene>
<reference key="1">
    <citation type="journal article" date="2002" name="J. Mol. Microbiol. Biotechnol.">
        <title>The genome of Methanosarcina mazei: evidence for lateral gene transfer between Bacteria and Archaea.</title>
        <authorList>
            <person name="Deppenmeier U."/>
            <person name="Johann A."/>
            <person name="Hartsch T."/>
            <person name="Merkl R."/>
            <person name="Schmitz R.A."/>
            <person name="Martinez-Arias R."/>
            <person name="Henne A."/>
            <person name="Wiezer A."/>
            <person name="Baeumer S."/>
            <person name="Jacobi C."/>
            <person name="Brueggemann H."/>
            <person name="Lienard T."/>
            <person name="Christmann A."/>
            <person name="Boemecke M."/>
            <person name="Steckel S."/>
            <person name="Bhattacharyya A."/>
            <person name="Lykidis A."/>
            <person name="Overbeek R."/>
            <person name="Klenk H.-P."/>
            <person name="Gunsalus R.P."/>
            <person name="Fritz H.-J."/>
            <person name="Gottschalk G."/>
        </authorList>
    </citation>
    <scope>NUCLEOTIDE SEQUENCE [LARGE SCALE GENOMIC DNA]</scope>
    <source>
        <strain>ATCC BAA-159 / DSM 3647 / Goe1 / Go1 / JCM 11833 / OCM 88</strain>
    </source>
</reference>
<name>PUR7_METMA</name>
<protein>
    <recommendedName>
        <fullName evidence="1">Phosphoribosylaminoimidazole-succinocarboxamide synthase</fullName>
        <ecNumber evidence="1">6.3.2.6</ecNumber>
    </recommendedName>
    <alternativeName>
        <fullName evidence="1">SAICAR synthetase</fullName>
    </alternativeName>
</protein>
<evidence type="ECO:0000255" key="1">
    <source>
        <dbReference type="HAMAP-Rule" id="MF_00137"/>
    </source>
</evidence>
<dbReference type="EC" id="6.3.2.6" evidence="1"/>
<dbReference type="EMBL" id="AE008384">
    <property type="protein sequence ID" value="AAM30551.1"/>
    <property type="molecule type" value="Genomic_DNA"/>
</dbReference>
<dbReference type="RefSeq" id="WP_011032805.1">
    <property type="nucleotide sequence ID" value="NC_003901.1"/>
</dbReference>
<dbReference type="SMR" id="Q8PYK6"/>
<dbReference type="GeneID" id="82159879"/>
<dbReference type="KEGG" id="mma:MM_0855"/>
<dbReference type="PATRIC" id="fig|192952.21.peg.1011"/>
<dbReference type="eggNOG" id="arCOG04421">
    <property type="taxonomic scope" value="Archaea"/>
</dbReference>
<dbReference type="HOGENOM" id="CLU_061495_2_0_2"/>
<dbReference type="UniPathway" id="UPA00074">
    <property type="reaction ID" value="UER00131"/>
</dbReference>
<dbReference type="Proteomes" id="UP000000595">
    <property type="component" value="Chromosome"/>
</dbReference>
<dbReference type="GO" id="GO:0005524">
    <property type="term" value="F:ATP binding"/>
    <property type="evidence" value="ECO:0007669"/>
    <property type="project" value="UniProtKB-KW"/>
</dbReference>
<dbReference type="GO" id="GO:0004639">
    <property type="term" value="F:phosphoribosylaminoimidazolesuccinocarboxamide synthase activity"/>
    <property type="evidence" value="ECO:0007669"/>
    <property type="project" value="UniProtKB-UniRule"/>
</dbReference>
<dbReference type="GO" id="GO:0006189">
    <property type="term" value="P:'de novo' IMP biosynthetic process"/>
    <property type="evidence" value="ECO:0007669"/>
    <property type="project" value="UniProtKB-UniRule"/>
</dbReference>
<dbReference type="GO" id="GO:0009236">
    <property type="term" value="P:cobalamin biosynthetic process"/>
    <property type="evidence" value="ECO:0007669"/>
    <property type="project" value="InterPro"/>
</dbReference>
<dbReference type="CDD" id="cd01415">
    <property type="entry name" value="SAICAR_synt_PurC"/>
    <property type="match status" value="1"/>
</dbReference>
<dbReference type="FunFam" id="3.30.470.20:FF:000006">
    <property type="entry name" value="Phosphoribosylaminoimidazole-succinocarboxamide synthase"/>
    <property type="match status" value="1"/>
</dbReference>
<dbReference type="Gene3D" id="3.30.470.20">
    <property type="entry name" value="ATP-grasp fold, B domain"/>
    <property type="match status" value="1"/>
</dbReference>
<dbReference type="Gene3D" id="3.30.200.20">
    <property type="entry name" value="Phosphorylase Kinase, domain 1"/>
    <property type="match status" value="1"/>
</dbReference>
<dbReference type="HAMAP" id="MF_00137">
    <property type="entry name" value="SAICAR_synth"/>
    <property type="match status" value="1"/>
</dbReference>
<dbReference type="InterPro" id="IPR028923">
    <property type="entry name" value="SAICAR_synt/ADE2_N"/>
</dbReference>
<dbReference type="InterPro" id="IPR033934">
    <property type="entry name" value="SAICAR_synt_PurC"/>
</dbReference>
<dbReference type="InterPro" id="IPR001636">
    <property type="entry name" value="SAICAR_synth"/>
</dbReference>
<dbReference type="InterPro" id="IPR050089">
    <property type="entry name" value="SAICAR_synthetase"/>
</dbReference>
<dbReference type="InterPro" id="IPR018236">
    <property type="entry name" value="SAICAR_synthetase_CS"/>
</dbReference>
<dbReference type="NCBIfam" id="TIGR00081">
    <property type="entry name" value="purC"/>
    <property type="match status" value="1"/>
</dbReference>
<dbReference type="PANTHER" id="PTHR43599">
    <property type="entry name" value="MULTIFUNCTIONAL PROTEIN ADE2"/>
    <property type="match status" value="1"/>
</dbReference>
<dbReference type="PANTHER" id="PTHR43599:SF3">
    <property type="entry name" value="SI:DKEY-6E2.2"/>
    <property type="match status" value="1"/>
</dbReference>
<dbReference type="Pfam" id="PF01259">
    <property type="entry name" value="SAICAR_synt"/>
    <property type="match status" value="1"/>
</dbReference>
<dbReference type="SUPFAM" id="SSF56104">
    <property type="entry name" value="SAICAR synthase-like"/>
    <property type="match status" value="1"/>
</dbReference>
<dbReference type="PROSITE" id="PS01057">
    <property type="entry name" value="SAICAR_SYNTHETASE_1"/>
    <property type="match status" value="1"/>
</dbReference>
<dbReference type="PROSITE" id="PS01058">
    <property type="entry name" value="SAICAR_SYNTHETASE_2"/>
    <property type="match status" value="1"/>
</dbReference>
<accession>Q8PYK6</accession>
<comment type="catalytic activity">
    <reaction evidence="1">
        <text>5-amino-1-(5-phospho-D-ribosyl)imidazole-4-carboxylate + L-aspartate + ATP = (2S)-2-[5-amino-1-(5-phospho-beta-D-ribosyl)imidazole-4-carboxamido]succinate + ADP + phosphate + 2 H(+)</text>
        <dbReference type="Rhea" id="RHEA:22628"/>
        <dbReference type="ChEBI" id="CHEBI:15378"/>
        <dbReference type="ChEBI" id="CHEBI:29991"/>
        <dbReference type="ChEBI" id="CHEBI:30616"/>
        <dbReference type="ChEBI" id="CHEBI:43474"/>
        <dbReference type="ChEBI" id="CHEBI:58443"/>
        <dbReference type="ChEBI" id="CHEBI:77657"/>
        <dbReference type="ChEBI" id="CHEBI:456216"/>
        <dbReference type="EC" id="6.3.2.6"/>
    </reaction>
</comment>
<comment type="pathway">
    <text evidence="1">Purine metabolism; IMP biosynthesis via de novo pathway; 5-amino-1-(5-phospho-D-ribosyl)imidazole-4-carboxamide from 5-amino-1-(5-phospho-D-ribosyl)imidazole-4-carboxylate: step 1/2.</text>
</comment>
<comment type="similarity">
    <text evidence="1">Belongs to the SAICAR synthetase family.</text>
</comment>
<organism>
    <name type="scientific">Methanosarcina mazei (strain ATCC BAA-159 / DSM 3647 / Goe1 / Go1 / JCM 11833 / OCM 88)</name>
    <name type="common">Methanosarcina frisia</name>
    <dbReference type="NCBI Taxonomy" id="192952"/>
    <lineage>
        <taxon>Archaea</taxon>
        <taxon>Methanobacteriati</taxon>
        <taxon>Methanobacteriota</taxon>
        <taxon>Stenosarchaea group</taxon>
        <taxon>Methanomicrobia</taxon>
        <taxon>Methanosarcinales</taxon>
        <taxon>Methanosarcinaceae</taxon>
        <taxon>Methanosarcina</taxon>
    </lineage>
</organism>
<keyword id="KW-0067">ATP-binding</keyword>
<keyword id="KW-0436">Ligase</keyword>
<keyword id="KW-0547">Nucleotide-binding</keyword>
<keyword id="KW-0658">Purine biosynthesis</keyword>
<proteinExistence type="inferred from homology"/>
<sequence>MKREQLYSGKAKTIYRTDDPDTLIAEFRNSLTAFNGEKKGEMELKGYYNAQISKKIFEMLEASGVKTHFVSMLTDIDMLVREVEIIKIEVIVRNIAAGSITRKYPIKEGTILKPPVLVFDFKSDEYGDPMLNDDIALALGIATREELAELRKLALRVNELLVPYLDEKGILLPDFKLEFGRREGEIVLADEISCDTCRFWDKKTGQSMDKDVFRFDKGDISKAYEEVARRIVPEIFE</sequence>
<feature type="chain" id="PRO_0000100911" description="Phosphoribosylaminoimidazole-succinocarboxamide synthase">
    <location>
        <begin position="1"/>
        <end position="237"/>
    </location>
</feature>